<organismHost>
    <name type="scientific">Gallus gallus</name>
    <name type="common">Chicken</name>
    <dbReference type="NCBI Taxonomy" id="9031"/>
</organismHost>
<name>FPS_FUJSV</name>
<feature type="chain" id="PRO_0000088096" description="Tyrosine-protein kinase transforming protein Fps">
    <location>
        <begin position="1"/>
        <end position="873"/>
    </location>
</feature>
<feature type="domain" description="F-BAR" evidence="4">
    <location>
        <begin position="50"/>
        <end position="313"/>
    </location>
</feature>
<feature type="domain" description="SH2" evidence="3">
    <location>
        <begin position="511"/>
        <end position="600"/>
    </location>
</feature>
<feature type="domain" description="Protein kinase" evidence="2">
    <location>
        <begin position="612"/>
        <end position="865"/>
    </location>
</feature>
<feature type="region of interest" description="Disordered" evidence="6">
    <location>
        <begin position="1"/>
        <end position="46"/>
    </location>
</feature>
<feature type="region of interest" description="Disordered" evidence="6">
    <location>
        <begin position="445"/>
        <end position="471"/>
    </location>
</feature>
<feature type="compositionally biased region" description="Polar residues" evidence="6">
    <location>
        <begin position="11"/>
        <end position="29"/>
    </location>
</feature>
<feature type="compositionally biased region" description="Basic and acidic residues" evidence="6">
    <location>
        <begin position="456"/>
        <end position="469"/>
    </location>
</feature>
<feature type="active site" description="Proton acceptor" evidence="2 5">
    <location>
        <position position="734"/>
    </location>
</feature>
<feature type="binding site" evidence="2">
    <location>
        <begin position="618"/>
        <end position="626"/>
    </location>
    <ligand>
        <name>ATP</name>
        <dbReference type="ChEBI" id="CHEBI:30616"/>
    </ligand>
</feature>
<feature type="binding site" evidence="2">
    <location>
        <position position="641"/>
    </location>
    <ligand>
        <name>ATP</name>
        <dbReference type="ChEBI" id="CHEBI:30616"/>
    </ligand>
</feature>
<feature type="modified residue" description="Phosphotyrosine; by autocatalysis" evidence="1">
    <location>
        <position position="764"/>
    </location>
</feature>
<feature type="sequence variant" description="In clone TS.">
    <original>T</original>
    <variation>S</variation>
    <location>
        <position position="63"/>
    </location>
</feature>
<feature type="sequence variant" description="In clone TS.">
    <original>H</original>
    <variation>R</variation>
    <location>
        <position position="251"/>
    </location>
</feature>
<feature type="sequence variant" description="In clone TS.">
    <original>K</original>
    <variation>E</variation>
    <location>
        <position position="300"/>
    </location>
</feature>
<feature type="sequence variant" description="In clone TS.">
    <original>N</original>
    <variation>S</variation>
    <location>
        <position position="343"/>
    </location>
</feature>
<feature type="sequence variant" description="In clone TS.">
    <original>A</original>
    <variation>T</variation>
    <location>
        <position position="438"/>
    </location>
</feature>
<feature type="sequence variant" description="In clone TS.">
    <original>E</original>
    <variation>D</variation>
    <location>
        <position position="447"/>
    </location>
</feature>
<feature type="sequence variant" description="In clone TS.">
    <original>R</original>
    <variation>C</variation>
    <location>
        <position position="463"/>
    </location>
</feature>
<feature type="sequence variant" description="In clone TS.">
    <original>E</original>
    <variation>D</variation>
    <location>
        <position position="716"/>
    </location>
</feature>
<reference key="1">
    <citation type="journal article" date="1982" name="Cell">
        <title>Nucleotide sequence of Fujinami sarcoma virus: evolutionary relationship of its transforming gene with transforming genes of other sarcoma viruses.</title>
        <authorList>
            <person name="Shibuya M."/>
            <person name="Hanafusa H."/>
        </authorList>
    </citation>
    <scope>NUCLEOTIDE SEQUENCE [GENOMIC RNA]</scope>
</reference>
<reference key="2">
    <citation type="journal article" date="1986" name="Virology">
        <title>Single amino acid substitution, from Glu1025 to Asp, of the fps oncogenic protein causes temperature sensitivity in transformation and kinase activity.</title>
        <authorList>
            <person name="Chen L.H."/>
            <person name="Hatada E."/>
            <person name="Wheatley W."/>
            <person name="Lee W.H."/>
        </authorList>
    </citation>
    <scope>NUCLEOTIDE SEQUENCE [GENOMIC RNA] (CLONE TS)</scope>
</reference>
<sequence length="873" mass="99536">ASGQLHRPQPQEHTSTSAAAGTWRLTQASESRHRLPHCSAAPSHQDHSAMGFGPELWCPKGHTELLRLQDSELRLLELMKKWMSQRAKSDREYAGMLHHMFSQLEKQEGLGHLRATDHSSQIGESWWVLASQTETLSQTLRRHAEELAAGPLAKLSILIRDKQQLRKVFSEQWQQLSQEYAWTTQQEVEKLKAQYRSLVRDSTQAKRKYQEASKDKEREKAKEKYVRSLSKLYALHNQYVLAVQAAALHHHHHYQRALPTLHESLYSLQQEMVLVLKEILGEYCSITSLVQEDVLAIHQKVAHAVEMIDPATEYSSFVQCHRYDSEVPPAVTFDESLLEEAENLEPGELQLNELTIESVQHSLTSIEEELLASRKAVSSKEQRVWELQVELRGEELALSPGERVHLLGKRQGLREAQQQLQGLVCAQAKLQAQRDMLANKLAELGSEEPPPALPLQEDRQSARSTDQERSGVTALKTIKNHISGIFSPRFSLPPPVPLIPEVQKPLCQQAWYHGAIPRSEVQELLKYSGDFLVRESQGKQEYVLSVLWDGQPRHFIIQAADNLYRLEDDGLPTIPLLIDHLLQSQRPITRKSGIVLTRAVLKDKWVLNHEDVLLGERIGRGNFGEVFSGRLRADNTPVAVKSCRETLPPELKAKFLQEARILKQCNHPNIVRLIGVCTQKQPIYIVMELVQGGDFLSFLRSKGPRLKMKKLIKMMENAAAGMEYLESKHCIHRDLAARNCLVTEKNTLKISDFGMSRQEEDGVYASTGGMKQIPVKWTAPEALNYGWYSSESDVWSFGILLWEAFSLGAVPYANLSNQQTREAIEQGVRLEPPEQCPEDVYRLMQRCWEYDPHRRPSFGAVHQDLIAIRKRHR</sequence>
<organism>
    <name type="scientific">Fujinami sarcoma virus</name>
    <name type="common">FSV</name>
    <dbReference type="NCBI Taxonomy" id="11885"/>
    <lineage>
        <taxon>Viruses</taxon>
        <taxon>Riboviria</taxon>
        <taxon>Pararnavirae</taxon>
        <taxon>Artverviricota</taxon>
        <taxon>Revtraviricetes</taxon>
        <taxon>Ortervirales</taxon>
        <taxon>Retroviridae</taxon>
        <taxon>Orthoretrovirinae</taxon>
        <taxon>Alpharetrovirus</taxon>
    </lineage>
</organism>
<proteinExistence type="inferred from homology"/>
<protein>
    <recommendedName>
        <fullName>Tyrosine-protein kinase transforming protein Fps</fullName>
        <ecNumber>2.7.10.2</ecNumber>
    </recommendedName>
</protein>
<gene>
    <name type="primary">V-FPS</name>
</gene>
<keyword id="KW-0067">ATP-binding</keyword>
<keyword id="KW-0175">Coiled coil</keyword>
<keyword id="KW-0418">Kinase</keyword>
<keyword id="KW-0547">Nucleotide-binding</keyword>
<keyword id="KW-0553">Oncogene</keyword>
<keyword id="KW-0597">Phosphoprotein</keyword>
<keyword id="KW-0727">SH2 domain</keyword>
<keyword id="KW-0808">Transferase</keyword>
<keyword id="KW-0829">Tyrosine-protein kinase</keyword>
<comment type="catalytic activity">
    <reaction evidence="5">
        <text>L-tyrosyl-[protein] + ATP = O-phospho-L-tyrosyl-[protein] + ADP + H(+)</text>
        <dbReference type="Rhea" id="RHEA:10596"/>
        <dbReference type="Rhea" id="RHEA-COMP:10136"/>
        <dbReference type="Rhea" id="RHEA-COMP:20101"/>
        <dbReference type="ChEBI" id="CHEBI:15378"/>
        <dbReference type="ChEBI" id="CHEBI:30616"/>
        <dbReference type="ChEBI" id="CHEBI:46858"/>
        <dbReference type="ChEBI" id="CHEBI:61978"/>
        <dbReference type="ChEBI" id="CHEBI:456216"/>
        <dbReference type="EC" id="2.7.10.2"/>
    </reaction>
</comment>
<comment type="miscellaneous">
    <text>This protein is synthesized as a Gag-Fps polyprotein.</text>
</comment>
<comment type="similarity">
    <text evidence="2">Belongs to the protein kinase superfamily. Tyr protein kinase family. Fes/fps subfamily.</text>
</comment>
<comment type="sequence caution" evidence="7">
    <conflict type="erroneous initiation">
        <sequence resource="EMBL-CDS" id="AAA42402"/>
    </conflict>
</comment>
<accession>P00530</accession>
<dbReference type="EC" id="2.7.10.2"/>
<dbReference type="EMBL" id="J02194">
    <property type="protein sequence ID" value="AAA42402.1"/>
    <property type="status" value="ALT_INIT"/>
    <property type="molecule type" value="Genomic_RNA"/>
</dbReference>
<dbReference type="EMBL" id="M14930">
    <property type="protein sequence ID" value="AAA42403.1"/>
    <property type="molecule type" value="Genomic_RNA"/>
</dbReference>
<dbReference type="PIR" id="A00636">
    <property type="entry name" value="TVFVF"/>
</dbReference>
<dbReference type="PIR" id="A26898">
    <property type="entry name" value="TVFVFS"/>
</dbReference>
<dbReference type="RefSeq" id="NP_955606.1">
    <property type="nucleotide sequence ID" value="NP_056889.1"/>
</dbReference>
<dbReference type="SMR" id="P00530"/>
<dbReference type="BindingDB" id="P00530"/>
<dbReference type="ChEMBL" id="CHEMBL5708"/>
<dbReference type="BRENDA" id="2.7.10.2">
    <property type="organism ID" value="2335"/>
</dbReference>
<dbReference type="Proteomes" id="UP000124870">
    <property type="component" value="Genome"/>
</dbReference>
<dbReference type="GO" id="GO:0005524">
    <property type="term" value="F:ATP binding"/>
    <property type="evidence" value="ECO:0007669"/>
    <property type="project" value="UniProtKB-KW"/>
</dbReference>
<dbReference type="GO" id="GO:0004715">
    <property type="term" value="F:non-membrane spanning protein tyrosine kinase activity"/>
    <property type="evidence" value="ECO:0007669"/>
    <property type="project" value="UniProtKB-EC"/>
</dbReference>
<dbReference type="CDD" id="cd07685">
    <property type="entry name" value="F-BAR_Fes"/>
    <property type="match status" value="1"/>
</dbReference>
<dbReference type="CDD" id="cd05084">
    <property type="entry name" value="PTKc_Fes"/>
    <property type="match status" value="1"/>
</dbReference>
<dbReference type="CDD" id="cd10361">
    <property type="entry name" value="SH2_Fps_family"/>
    <property type="match status" value="1"/>
</dbReference>
<dbReference type="FunFam" id="1.10.287.160:FF:000006">
    <property type="entry name" value="Tyrosine-protein kinase"/>
    <property type="match status" value="1"/>
</dbReference>
<dbReference type="FunFam" id="1.10.510.10:FF:000212">
    <property type="entry name" value="Tyrosine-protein kinase"/>
    <property type="match status" value="1"/>
</dbReference>
<dbReference type="FunFam" id="1.20.1270.60:FF:000030">
    <property type="entry name" value="Tyrosine-protein kinase"/>
    <property type="match status" value="1"/>
</dbReference>
<dbReference type="FunFam" id="3.30.200.20:FF:000089">
    <property type="entry name" value="Tyrosine-protein kinase"/>
    <property type="match status" value="1"/>
</dbReference>
<dbReference type="FunFam" id="3.30.505.10:FF:000020">
    <property type="entry name" value="Tyrosine-protein kinase"/>
    <property type="match status" value="1"/>
</dbReference>
<dbReference type="Gene3D" id="1.20.1270.60">
    <property type="entry name" value="Arfaptin homology (AH) domain/BAR domain"/>
    <property type="match status" value="1"/>
</dbReference>
<dbReference type="Gene3D" id="1.10.287.160">
    <property type="entry name" value="HR1 repeat"/>
    <property type="match status" value="1"/>
</dbReference>
<dbReference type="Gene3D" id="3.30.200.20">
    <property type="entry name" value="Phosphorylase Kinase, domain 1"/>
    <property type="match status" value="1"/>
</dbReference>
<dbReference type="Gene3D" id="3.30.505.10">
    <property type="entry name" value="SH2 domain"/>
    <property type="match status" value="1"/>
</dbReference>
<dbReference type="Gene3D" id="1.10.510.10">
    <property type="entry name" value="Transferase(Phosphotransferase) domain 1"/>
    <property type="match status" value="1"/>
</dbReference>
<dbReference type="InterPro" id="IPR027267">
    <property type="entry name" value="AH/BAR_dom_sf"/>
</dbReference>
<dbReference type="InterPro" id="IPR031160">
    <property type="entry name" value="F_BAR"/>
</dbReference>
<dbReference type="InterPro" id="IPR001060">
    <property type="entry name" value="FCH_dom"/>
</dbReference>
<dbReference type="InterPro" id="IPR035849">
    <property type="entry name" value="Fes/Fps/Fer_SH2"/>
</dbReference>
<dbReference type="InterPro" id="IPR011009">
    <property type="entry name" value="Kinase-like_dom_sf"/>
</dbReference>
<dbReference type="InterPro" id="IPR050198">
    <property type="entry name" value="Non-receptor_tyrosine_kinases"/>
</dbReference>
<dbReference type="InterPro" id="IPR000719">
    <property type="entry name" value="Prot_kinase_dom"/>
</dbReference>
<dbReference type="InterPro" id="IPR017441">
    <property type="entry name" value="Protein_kinase_ATP_BS"/>
</dbReference>
<dbReference type="InterPro" id="IPR001245">
    <property type="entry name" value="Ser-Thr/Tyr_kinase_cat_dom"/>
</dbReference>
<dbReference type="InterPro" id="IPR000980">
    <property type="entry name" value="SH2"/>
</dbReference>
<dbReference type="InterPro" id="IPR036860">
    <property type="entry name" value="SH2_dom_sf"/>
</dbReference>
<dbReference type="InterPro" id="IPR016250">
    <property type="entry name" value="Tyr-prot_kinase_Fes/Fps"/>
</dbReference>
<dbReference type="InterPro" id="IPR008266">
    <property type="entry name" value="Tyr_kinase_AS"/>
</dbReference>
<dbReference type="InterPro" id="IPR020635">
    <property type="entry name" value="Tyr_kinase_cat_dom"/>
</dbReference>
<dbReference type="PANTHER" id="PTHR24418">
    <property type="entry name" value="TYROSINE-PROTEIN KINASE"/>
    <property type="match status" value="1"/>
</dbReference>
<dbReference type="Pfam" id="PF00611">
    <property type="entry name" value="FCH"/>
    <property type="match status" value="1"/>
</dbReference>
<dbReference type="Pfam" id="PF07714">
    <property type="entry name" value="PK_Tyr_Ser-Thr"/>
    <property type="match status" value="1"/>
</dbReference>
<dbReference type="Pfam" id="PF00017">
    <property type="entry name" value="SH2"/>
    <property type="match status" value="1"/>
</dbReference>
<dbReference type="PIRSF" id="PIRSF000632">
    <property type="entry name" value="TyrPK_fps"/>
    <property type="match status" value="1"/>
</dbReference>
<dbReference type="PRINTS" id="PR00109">
    <property type="entry name" value="TYRKINASE"/>
</dbReference>
<dbReference type="SMART" id="SM00055">
    <property type="entry name" value="FCH"/>
    <property type="match status" value="1"/>
</dbReference>
<dbReference type="SMART" id="SM00252">
    <property type="entry name" value="SH2"/>
    <property type="match status" value="1"/>
</dbReference>
<dbReference type="SMART" id="SM00219">
    <property type="entry name" value="TyrKc"/>
    <property type="match status" value="1"/>
</dbReference>
<dbReference type="SUPFAM" id="SSF103657">
    <property type="entry name" value="BAR/IMD domain-like"/>
    <property type="match status" value="1"/>
</dbReference>
<dbReference type="SUPFAM" id="SSF56112">
    <property type="entry name" value="Protein kinase-like (PK-like)"/>
    <property type="match status" value="1"/>
</dbReference>
<dbReference type="SUPFAM" id="SSF55550">
    <property type="entry name" value="SH2 domain"/>
    <property type="match status" value="1"/>
</dbReference>
<dbReference type="PROSITE" id="PS51741">
    <property type="entry name" value="F_BAR"/>
    <property type="match status" value="1"/>
</dbReference>
<dbReference type="PROSITE" id="PS00107">
    <property type="entry name" value="PROTEIN_KINASE_ATP"/>
    <property type="match status" value="1"/>
</dbReference>
<dbReference type="PROSITE" id="PS50011">
    <property type="entry name" value="PROTEIN_KINASE_DOM"/>
    <property type="match status" value="1"/>
</dbReference>
<dbReference type="PROSITE" id="PS00109">
    <property type="entry name" value="PROTEIN_KINASE_TYR"/>
    <property type="match status" value="1"/>
</dbReference>
<dbReference type="PROSITE" id="PS50001">
    <property type="entry name" value="SH2"/>
    <property type="match status" value="1"/>
</dbReference>
<evidence type="ECO:0000250" key="1"/>
<evidence type="ECO:0000255" key="2">
    <source>
        <dbReference type="PROSITE-ProRule" id="PRU00159"/>
    </source>
</evidence>
<evidence type="ECO:0000255" key="3">
    <source>
        <dbReference type="PROSITE-ProRule" id="PRU00191"/>
    </source>
</evidence>
<evidence type="ECO:0000255" key="4">
    <source>
        <dbReference type="PROSITE-ProRule" id="PRU01077"/>
    </source>
</evidence>
<evidence type="ECO:0000255" key="5">
    <source>
        <dbReference type="PROSITE-ProRule" id="PRU10028"/>
    </source>
</evidence>
<evidence type="ECO:0000256" key="6">
    <source>
        <dbReference type="SAM" id="MobiDB-lite"/>
    </source>
</evidence>
<evidence type="ECO:0000305" key="7"/>